<gene>
    <name type="primary">PDGFRA</name>
</gene>
<comment type="function">
    <text evidence="1 10">Tyrosine-protein kinase that acts as a cell-surface receptor for PDGFA, PDGFB and PDGFC and plays an essential role in the regulation of embryonic development, cell proliferation, survival and chemotaxis. Depending on the context, promotes or inhibits cell proliferation and cell migration. Plays an important role in the differentiation of bone marrow-derived mesenchymal stem cells. Required for normal skeleton development. Required for normal development of the gastrointestinal tract. Plays a role in cell migration and chemotaxis in wound healing. Plays a role in platelet activation, secretion of agonists from platelet granules, and in thrombin-induced platelet aggregation. Binding of its cognate ligands - homodimeric PDGFA, homodimeric PDGFB, heterodimers formed by PDGFA and PDGFB or homodimeric PDGFC -leads to the activation of several signaling cascades; the response depends on the nature of the bound ligand and is modulated by the formation of heterodimers between PDGFRA and PDGFRB. Phosphorylates PIK3R1, PLCG1, and PTPN11. Activation of PLCG1 leads to the production of the cellular signaling molecules diacylglycerol and inositol 1,4,5-trisphosphate, mobilization of cytosolic Ca(2+) and the activation of protein kinase C. Phosphorylates PIK3R1, the regulatory subunit of phosphatidylinositol 3-kinase, and thereby mediates activation of the AKT1 signaling pathway. Mediates activation of HRAS and of the MAP kinases MAPK1/ERK2 and/or MAPK3/ERK1. Promotes activation of STAT family members STAT1, STAT3 and STAT5A and/or STAT5B. Receptor signaling is down-regulated by protein phosphatases that dephosphorylate the receptor and its down-stream effectors, and by rapid internalization of the activated receptor (By similarity).</text>
</comment>
<comment type="catalytic activity">
    <reaction evidence="7">
        <text>L-tyrosyl-[protein] + ATP = O-phospho-L-tyrosyl-[protein] + ADP + H(+)</text>
        <dbReference type="Rhea" id="RHEA:10596"/>
        <dbReference type="Rhea" id="RHEA-COMP:10136"/>
        <dbReference type="Rhea" id="RHEA-COMP:20101"/>
        <dbReference type="ChEBI" id="CHEBI:15378"/>
        <dbReference type="ChEBI" id="CHEBI:30616"/>
        <dbReference type="ChEBI" id="CHEBI:46858"/>
        <dbReference type="ChEBI" id="CHEBI:61978"/>
        <dbReference type="ChEBI" id="CHEBI:456216"/>
        <dbReference type="EC" id="2.7.10.1"/>
    </reaction>
</comment>
<comment type="activity regulation">
    <text evidence="1">Present in an inactive conformation in the absence of bound ligand. Binding of PDGFA and/or PDGFB leads to dimerization and activation by autophosphorylation on tyrosine residues (By similarity).</text>
</comment>
<comment type="subunit">
    <text evidence="1">Interacts with homodimeric PDGFA, PDGFB and PDGFC, and with heterodimers formed by PDGFA and PDGFB. Monomer in the absence of bound ligand. Interaction with dimeric PDGFA, PDGFB and/or PDGFC leads to receptor dimerization, where both PDGFRA homodimers and heterodimers with PDGFRB are observed (By similarity).</text>
</comment>
<comment type="subcellular location">
    <subcellularLocation>
        <location evidence="2">Cell membrane</location>
        <topology evidence="2">Single-pass type I membrane protein</topology>
    </subcellularLocation>
    <subcellularLocation>
        <location evidence="3">Cell projection</location>
        <location evidence="3">Cilium</location>
    </subcellularLocation>
    <subcellularLocation>
        <location evidence="3">Golgi apparatus</location>
    </subcellularLocation>
</comment>
<comment type="developmental stage">
    <text evidence="9">Expressed throughout the mesenchyme of early limb buds. At later stages, present in the condensing chondrogenic mesenchyme, then the perichondrium. Down-regulated in areas that will not give rise to cartilage and is then lost from cartilage forming areas after they begin to differentiate.</text>
</comment>
<comment type="PTM">
    <text evidence="3">Ubiquitinated, leading to its internalization and degradation.</text>
</comment>
<comment type="PTM">
    <text evidence="1">Autophosphorylated on tyrosine residues upon ligand binding. Autophosphorylation occurs in trans, i.e. one subunit of the dimeric receptor phosphorylates tyrosine residues on the other subunit (By similarity).</text>
</comment>
<comment type="similarity">
    <text evidence="6">Belongs to the protein kinase superfamily. Tyr protein kinase family. CSF-1/PDGF receptor subfamily.</text>
</comment>
<proteinExistence type="evidence at transcript level"/>
<protein>
    <recommendedName>
        <fullName>Platelet-derived growth factor receptor alpha</fullName>
        <shortName>PDGF-R-alpha</shortName>
        <shortName>PDGFR-alpha</shortName>
        <ecNumber>2.7.10.1</ecNumber>
    </recommendedName>
    <alternativeName>
        <fullName>Alpha platelet-derived growth factor receptor</fullName>
    </alternativeName>
    <alternativeName>
        <fullName>Alpha-type platelet-derived growth factor receptor</fullName>
    </alternativeName>
</protein>
<evidence type="ECO:0000250" key="1"/>
<evidence type="ECO:0000250" key="2">
    <source>
        <dbReference type="UniProtKB" id="P16234"/>
    </source>
</evidence>
<evidence type="ECO:0000250" key="3">
    <source>
        <dbReference type="UniProtKB" id="P26618"/>
    </source>
</evidence>
<evidence type="ECO:0000255" key="4"/>
<evidence type="ECO:0000255" key="5">
    <source>
        <dbReference type="PROSITE-ProRule" id="PRU00114"/>
    </source>
</evidence>
<evidence type="ECO:0000255" key="6">
    <source>
        <dbReference type="PROSITE-ProRule" id="PRU00159"/>
    </source>
</evidence>
<evidence type="ECO:0000255" key="7">
    <source>
        <dbReference type="PROSITE-ProRule" id="PRU10028"/>
    </source>
</evidence>
<evidence type="ECO:0000256" key="8">
    <source>
        <dbReference type="SAM" id="MobiDB-lite"/>
    </source>
</evidence>
<evidence type="ECO:0000269" key="9">
    <source>
    </source>
</evidence>
<evidence type="ECO:0000269" key="10">
    <source>
    </source>
</evidence>
<organism>
    <name type="scientific">Gallus gallus</name>
    <name type="common">Chicken</name>
    <dbReference type="NCBI Taxonomy" id="9031"/>
    <lineage>
        <taxon>Eukaryota</taxon>
        <taxon>Metazoa</taxon>
        <taxon>Chordata</taxon>
        <taxon>Craniata</taxon>
        <taxon>Vertebrata</taxon>
        <taxon>Euteleostomi</taxon>
        <taxon>Archelosauria</taxon>
        <taxon>Archosauria</taxon>
        <taxon>Dinosauria</taxon>
        <taxon>Saurischia</taxon>
        <taxon>Theropoda</taxon>
        <taxon>Coelurosauria</taxon>
        <taxon>Aves</taxon>
        <taxon>Neognathae</taxon>
        <taxon>Galloanserae</taxon>
        <taxon>Galliformes</taxon>
        <taxon>Phasianidae</taxon>
        <taxon>Phasianinae</taxon>
        <taxon>Gallus</taxon>
    </lineage>
</organism>
<dbReference type="EC" id="2.7.10.1"/>
<dbReference type="EMBL" id="AF188842">
    <property type="protein sequence ID" value="AAF01460.1"/>
    <property type="molecule type" value="mRNA"/>
</dbReference>
<dbReference type="SMR" id="Q9PUF6"/>
<dbReference type="FunCoup" id="Q9PUF6">
    <property type="interactions" value="105"/>
</dbReference>
<dbReference type="STRING" id="9031.ENSGALP00000064586"/>
<dbReference type="GlyCosmos" id="Q9PUF6">
    <property type="glycosylation" value="8 sites, No reported glycans"/>
</dbReference>
<dbReference type="GlyGen" id="Q9PUF6">
    <property type="glycosylation" value="8 sites"/>
</dbReference>
<dbReference type="PaxDb" id="9031-ENSGALP00000009175"/>
<dbReference type="VEuPathDB" id="HostDB:geneid_395509"/>
<dbReference type="eggNOG" id="KOG0200">
    <property type="taxonomic scope" value="Eukaryota"/>
</dbReference>
<dbReference type="InParanoid" id="Q9PUF6"/>
<dbReference type="OrthoDB" id="9936425at2759"/>
<dbReference type="PhylomeDB" id="Q9PUF6"/>
<dbReference type="Proteomes" id="UP000000539">
    <property type="component" value="Unassembled WGS sequence"/>
</dbReference>
<dbReference type="GO" id="GO:0005929">
    <property type="term" value="C:cilium"/>
    <property type="evidence" value="ECO:0000250"/>
    <property type="project" value="UniProtKB"/>
</dbReference>
<dbReference type="GO" id="GO:0005794">
    <property type="term" value="C:Golgi apparatus"/>
    <property type="evidence" value="ECO:0000250"/>
    <property type="project" value="UniProtKB"/>
</dbReference>
<dbReference type="GO" id="GO:0005886">
    <property type="term" value="C:plasma membrane"/>
    <property type="evidence" value="ECO:0000318"/>
    <property type="project" value="GO_Central"/>
</dbReference>
<dbReference type="GO" id="GO:0043235">
    <property type="term" value="C:receptor complex"/>
    <property type="evidence" value="ECO:0000318"/>
    <property type="project" value="GO_Central"/>
</dbReference>
<dbReference type="GO" id="GO:0005524">
    <property type="term" value="F:ATP binding"/>
    <property type="evidence" value="ECO:0007669"/>
    <property type="project" value="UniProtKB-KW"/>
</dbReference>
<dbReference type="GO" id="GO:0005018">
    <property type="term" value="F:platelet-derived growth factor alpha-receptor activity"/>
    <property type="evidence" value="ECO:0000318"/>
    <property type="project" value="GO_Central"/>
</dbReference>
<dbReference type="GO" id="GO:0048407">
    <property type="term" value="F:platelet-derived growth factor binding"/>
    <property type="evidence" value="ECO:0000318"/>
    <property type="project" value="GO_Central"/>
</dbReference>
<dbReference type="GO" id="GO:0016477">
    <property type="term" value="P:cell migration"/>
    <property type="evidence" value="ECO:0000318"/>
    <property type="project" value="GO_Central"/>
</dbReference>
<dbReference type="GO" id="GO:0007169">
    <property type="term" value="P:cell surface receptor protein tyrosine kinase signaling pathway"/>
    <property type="evidence" value="ECO:0000318"/>
    <property type="project" value="GO_Central"/>
</dbReference>
<dbReference type="GO" id="GO:0006935">
    <property type="term" value="P:chemotaxis"/>
    <property type="evidence" value="ECO:0007669"/>
    <property type="project" value="UniProtKB-KW"/>
</dbReference>
<dbReference type="GO" id="GO:0048701">
    <property type="term" value="P:embryonic cranial skeleton morphogenesis"/>
    <property type="evidence" value="ECO:0000318"/>
    <property type="project" value="GO_Central"/>
</dbReference>
<dbReference type="GO" id="GO:0048704">
    <property type="term" value="P:embryonic skeletal system morphogenesis"/>
    <property type="evidence" value="ECO:0000315"/>
    <property type="project" value="UniProtKB"/>
</dbReference>
<dbReference type="GO" id="GO:0008284">
    <property type="term" value="P:positive regulation of cell population proliferation"/>
    <property type="evidence" value="ECO:0000318"/>
    <property type="project" value="GO_Central"/>
</dbReference>
<dbReference type="CDD" id="cd05859">
    <property type="entry name" value="Ig4_PDGFR"/>
    <property type="match status" value="1"/>
</dbReference>
<dbReference type="CDD" id="cd05105">
    <property type="entry name" value="PTKc_PDGFR_alpha"/>
    <property type="match status" value="1"/>
</dbReference>
<dbReference type="FunFam" id="2.60.40.10:FF:000720">
    <property type="entry name" value="Platelet-derived growth factor receptor alpha"/>
    <property type="match status" value="1"/>
</dbReference>
<dbReference type="FunFam" id="2.60.40.10:FF:000725">
    <property type="entry name" value="Platelet-derived growth factor receptor alpha"/>
    <property type="match status" value="1"/>
</dbReference>
<dbReference type="FunFam" id="2.60.40.10:FF:000776">
    <property type="entry name" value="Platelet-derived growth factor receptor alpha"/>
    <property type="match status" value="1"/>
</dbReference>
<dbReference type="FunFam" id="2.60.40.10:FF:000832">
    <property type="entry name" value="Platelet-derived growth factor receptor alpha"/>
    <property type="match status" value="1"/>
</dbReference>
<dbReference type="FunFam" id="3.30.200.20:FF:000025">
    <property type="entry name" value="Platelet-derived growth factor receptor alpha"/>
    <property type="match status" value="1"/>
</dbReference>
<dbReference type="FunFam" id="2.60.40.10:FF:000223">
    <property type="entry name" value="Platelet-derived growth factor receptor beta"/>
    <property type="match status" value="1"/>
</dbReference>
<dbReference type="FunFam" id="1.10.510.10:FF:001735">
    <property type="entry name" value="T0011027 isoform 1"/>
    <property type="match status" value="1"/>
</dbReference>
<dbReference type="Gene3D" id="2.60.40.10">
    <property type="entry name" value="Immunoglobulins"/>
    <property type="match status" value="5"/>
</dbReference>
<dbReference type="Gene3D" id="3.30.200.20">
    <property type="entry name" value="Phosphorylase Kinase, domain 1"/>
    <property type="match status" value="1"/>
</dbReference>
<dbReference type="Gene3D" id="1.10.510.10">
    <property type="entry name" value="Transferase(Phosphotransferase) domain 1"/>
    <property type="match status" value="1"/>
</dbReference>
<dbReference type="InterPro" id="IPR007110">
    <property type="entry name" value="Ig-like_dom"/>
</dbReference>
<dbReference type="InterPro" id="IPR036179">
    <property type="entry name" value="Ig-like_dom_sf"/>
</dbReference>
<dbReference type="InterPro" id="IPR013783">
    <property type="entry name" value="Ig-like_fold"/>
</dbReference>
<dbReference type="InterPro" id="IPR013098">
    <property type="entry name" value="Ig_I-set"/>
</dbReference>
<dbReference type="InterPro" id="IPR003599">
    <property type="entry name" value="Ig_sub"/>
</dbReference>
<dbReference type="InterPro" id="IPR003598">
    <property type="entry name" value="Ig_sub2"/>
</dbReference>
<dbReference type="InterPro" id="IPR011009">
    <property type="entry name" value="Kinase-like_dom_sf"/>
</dbReference>
<dbReference type="InterPro" id="IPR027290">
    <property type="entry name" value="PDGFRA"/>
</dbReference>
<dbReference type="InterPro" id="IPR000719">
    <property type="entry name" value="Prot_kinase_dom"/>
</dbReference>
<dbReference type="InterPro" id="IPR017441">
    <property type="entry name" value="Protein_kinase_ATP_BS"/>
</dbReference>
<dbReference type="InterPro" id="IPR050122">
    <property type="entry name" value="RTK"/>
</dbReference>
<dbReference type="InterPro" id="IPR001245">
    <property type="entry name" value="Ser-Thr/Tyr_kinase_cat_dom"/>
</dbReference>
<dbReference type="InterPro" id="IPR008266">
    <property type="entry name" value="Tyr_kinase_AS"/>
</dbReference>
<dbReference type="InterPro" id="IPR020635">
    <property type="entry name" value="Tyr_kinase_cat_dom"/>
</dbReference>
<dbReference type="InterPro" id="IPR001824">
    <property type="entry name" value="Tyr_kinase_rcpt_3_CS"/>
</dbReference>
<dbReference type="PANTHER" id="PTHR24416:SF52">
    <property type="entry name" value="PLATELET-DERIVED GROWTH FACTOR RECEPTOR ALPHA"/>
    <property type="match status" value="1"/>
</dbReference>
<dbReference type="PANTHER" id="PTHR24416">
    <property type="entry name" value="TYROSINE-PROTEIN KINASE RECEPTOR"/>
    <property type="match status" value="1"/>
</dbReference>
<dbReference type="Pfam" id="PF07679">
    <property type="entry name" value="I-set"/>
    <property type="match status" value="1"/>
</dbReference>
<dbReference type="Pfam" id="PF25305">
    <property type="entry name" value="Ig_PDGFR_d4"/>
    <property type="match status" value="1"/>
</dbReference>
<dbReference type="Pfam" id="PF07714">
    <property type="entry name" value="PK_Tyr_Ser-Thr"/>
    <property type="match status" value="1"/>
</dbReference>
<dbReference type="Pfam" id="PF21339">
    <property type="entry name" value="VEGFR-1-like_Ig-like"/>
    <property type="match status" value="1"/>
</dbReference>
<dbReference type="PIRSF" id="PIRSF500950">
    <property type="entry name" value="Alpha-PDGF_receptor"/>
    <property type="match status" value="1"/>
</dbReference>
<dbReference type="PIRSF" id="PIRSF000615">
    <property type="entry name" value="TyrPK_CSF1-R"/>
    <property type="match status" value="1"/>
</dbReference>
<dbReference type="PRINTS" id="PR01832">
    <property type="entry name" value="VEGFRECEPTOR"/>
</dbReference>
<dbReference type="SMART" id="SM00409">
    <property type="entry name" value="IG"/>
    <property type="match status" value="4"/>
</dbReference>
<dbReference type="SMART" id="SM00408">
    <property type="entry name" value="IGc2"/>
    <property type="match status" value="2"/>
</dbReference>
<dbReference type="SMART" id="SM00219">
    <property type="entry name" value="TyrKc"/>
    <property type="match status" value="1"/>
</dbReference>
<dbReference type="SUPFAM" id="SSF48726">
    <property type="entry name" value="Immunoglobulin"/>
    <property type="match status" value="4"/>
</dbReference>
<dbReference type="SUPFAM" id="SSF56112">
    <property type="entry name" value="Protein kinase-like (PK-like)"/>
    <property type="match status" value="1"/>
</dbReference>
<dbReference type="PROSITE" id="PS50835">
    <property type="entry name" value="IG_LIKE"/>
    <property type="match status" value="2"/>
</dbReference>
<dbReference type="PROSITE" id="PS00107">
    <property type="entry name" value="PROTEIN_KINASE_ATP"/>
    <property type="match status" value="1"/>
</dbReference>
<dbReference type="PROSITE" id="PS50011">
    <property type="entry name" value="PROTEIN_KINASE_DOM"/>
    <property type="match status" value="1"/>
</dbReference>
<dbReference type="PROSITE" id="PS00109">
    <property type="entry name" value="PROTEIN_KINASE_TYR"/>
    <property type="match status" value="1"/>
</dbReference>
<dbReference type="PROSITE" id="PS00240">
    <property type="entry name" value="RECEPTOR_TYR_KIN_III"/>
    <property type="match status" value="1"/>
</dbReference>
<accession>Q9PUF6</accession>
<keyword id="KW-0067">ATP-binding</keyword>
<keyword id="KW-1003">Cell membrane</keyword>
<keyword id="KW-0966">Cell projection</keyword>
<keyword id="KW-0145">Chemotaxis</keyword>
<keyword id="KW-0217">Developmental protein</keyword>
<keyword id="KW-1015">Disulfide bond</keyword>
<keyword id="KW-0325">Glycoprotein</keyword>
<keyword id="KW-0333">Golgi apparatus</keyword>
<keyword id="KW-0393">Immunoglobulin domain</keyword>
<keyword id="KW-0418">Kinase</keyword>
<keyword id="KW-0472">Membrane</keyword>
<keyword id="KW-0547">Nucleotide-binding</keyword>
<keyword id="KW-0597">Phosphoprotein</keyword>
<keyword id="KW-0675">Receptor</keyword>
<keyword id="KW-1185">Reference proteome</keyword>
<keyword id="KW-0677">Repeat</keyword>
<keyword id="KW-0732">Signal</keyword>
<keyword id="KW-0808">Transferase</keyword>
<keyword id="KW-0812">Transmembrane</keyword>
<keyword id="KW-1133">Transmembrane helix</keyword>
<keyword id="KW-0829">Tyrosine-protein kinase</keyword>
<keyword id="KW-0832">Ubl conjugation</keyword>
<name>PGFRA_CHICK</name>
<reference key="1">
    <citation type="journal article" date="2000" name="Mech. Dev.">
        <title>Platelet-derived growth factor A modulates limb chondrogenesis both in vivo and in vitro.</title>
        <authorList>
            <person name="Ataliotis P."/>
        </authorList>
    </citation>
    <scope>NUCLEOTIDE SEQUENCE [MRNA]</scope>
    <scope>DEVELOPMENTAL STAGE</scope>
</reference>
<reference key="2">
    <citation type="journal article" date="2008" name="Development">
        <title>Disruption of PDGFRalpha-initiated PI3K activation and migration of somite derivatives leads to spina bifida.</title>
        <authorList>
            <person name="Pickett E.A."/>
            <person name="Olsen G.S."/>
            <person name="Tallquist M.D."/>
        </authorList>
    </citation>
    <scope>FUNCTION</scope>
</reference>
<sequence length="1087" mass="122941">MGTPPRTFLILGCFLTGPLLTLCQLPLPTIVPNRNEMVVQLNSNFTLKCSGDSEVSWQYPVTEGSHRIDIRHEENNSGLFVTVLEVGNASAAHTGMYVCYYNHTQVEDGEVEGKDIYIYVPDPDMPFVPSLPEDQFILVEEGDPTVIPCRTSDPSAEVTLVNSLDKPVYAFYDSKQGFVGNFLAGPYTCKTMVKGVEFKSDEFLIYILRATSQLPVEIEALKTVYKTGETIVVTCVVFDNEVVNLQWNYPGKVKEKGLIKLDDIKVPSQKLVYMLTIPDVLVKDTGDYECTARHATKEVKENKKVVITVHDKGFIHLEPQFSPLEAVNLHEVKNFVVDVQAYPAPKMYWLKDNVTLIENLTEIVTSSNRVQETRFQSVLKLIRAKEEDSGTILWLLKNEDEIKRYTFSLLIQVPALILDLMDDHQGSAGRQTVRCLAEGTPLPDVEWLVCKDIKKCSNDTSWTLLTNNISDIHMEAHLDERNMVESQVTFQKVEETLAVRCVARNDLGAVTRELKLVAPTLRSELTVAAAVLVLLVIVIISLIVLVIIWKQKPRYEIRWRVIESISPDGHEYIYVDPMQLPYDSRWEFPRDGLVLGRILGSGAFGKVVEGTAYGLSRSQPVMKVAVKMLKPTARSSEKQALMSELKIMTHLGPHLNIVNLLGACTKSGPIYIITEYCFYGDLVNYLHKNRDNFLSRHPEKPKKDLDIFGMNPADESTRSYVILSFENTGEYMDMKQADTTQYVPMLERKEGSKYSDIQRSVYDRPASYKKKSLSESEVKNLLSDDGSEGLSLLDLLSFTYQVARGMEFLASKNCVHRDLAARNVLLAQGKIVKICDFGLARDIMHDSNYVSKGSTFLPVKWMAPESIFDNLYTTLSDVWSYGILLWEIFSLGGILYPGMMVDSTFYNKIKSGYRMAKPDHATNEVYEIMVKCWNNEPEKRPSFYHLSEIVESLLPGEYKKSYEKIHLDFLKSDHPAVTRMRGDCDNAYIGVTYKNEDKIKDRESGFDEQRLSADSGYITPLPDIDPVSEDELGKRNRHSSQTSEESAIETGSSSSTFIKREDETIEDIDMMDDIGIDSSDLVEDSFL</sequence>
<feature type="signal peptide" evidence="4">
    <location>
        <begin position="1"/>
        <end position="23"/>
    </location>
</feature>
<feature type="chain" id="PRO_0000248883" description="Platelet-derived growth factor receptor alpha">
    <location>
        <begin position="24"/>
        <end position="1087"/>
    </location>
</feature>
<feature type="topological domain" description="Extracellular" evidence="4">
    <location>
        <begin position="24"/>
        <end position="528"/>
    </location>
</feature>
<feature type="transmembrane region" description="Helical" evidence="4">
    <location>
        <begin position="529"/>
        <end position="549"/>
    </location>
</feature>
<feature type="topological domain" description="Cytoplasmic" evidence="4">
    <location>
        <begin position="550"/>
        <end position="1087"/>
    </location>
</feature>
<feature type="domain" description="Ig-like C2-type 1">
    <location>
        <begin position="26"/>
        <end position="104"/>
    </location>
</feature>
<feature type="domain" description="Ig-like C2-type 2">
    <location>
        <begin position="116"/>
        <end position="208"/>
    </location>
</feature>
<feature type="domain" description="Ig-like C2-type 3">
    <location>
        <begin position="213"/>
        <end position="312"/>
    </location>
</feature>
<feature type="domain" description="Ig-like C2-type 4">
    <location>
        <begin position="314"/>
        <end position="411"/>
    </location>
</feature>
<feature type="domain" description="Ig-like C2-type 5">
    <location>
        <begin position="414"/>
        <end position="517"/>
    </location>
</feature>
<feature type="domain" description="Protein kinase" evidence="6">
    <location>
        <begin position="593"/>
        <end position="954"/>
    </location>
</feature>
<feature type="region of interest" description="Disordered" evidence="8">
    <location>
        <begin position="1000"/>
        <end position="1059"/>
    </location>
</feature>
<feature type="compositionally biased region" description="Basic and acidic residues" evidence="8">
    <location>
        <begin position="1000"/>
        <end position="1011"/>
    </location>
</feature>
<feature type="compositionally biased region" description="Polar residues" evidence="8">
    <location>
        <begin position="1039"/>
        <end position="1057"/>
    </location>
</feature>
<feature type="active site" description="Proton acceptor" evidence="6 7">
    <location>
        <position position="818"/>
    </location>
</feature>
<feature type="binding site" evidence="6">
    <location>
        <begin position="599"/>
        <end position="607"/>
    </location>
    <ligand>
        <name>ATP</name>
        <dbReference type="ChEBI" id="CHEBI:30616"/>
    </ligand>
</feature>
<feature type="binding site" evidence="6">
    <location>
        <position position="627"/>
    </location>
    <ligand>
        <name>ATP</name>
        <dbReference type="ChEBI" id="CHEBI:30616"/>
    </ligand>
</feature>
<feature type="modified residue" description="Phosphotyrosine; by autocatalysis" evidence="1">
    <location>
        <position position="572"/>
    </location>
</feature>
<feature type="modified residue" description="Phosphotyrosine; by autocatalysis" evidence="1">
    <location>
        <position position="574"/>
    </location>
</feature>
<feature type="modified residue" description="Phosphotyrosine; by autocatalysis" evidence="1">
    <location>
        <position position="720"/>
    </location>
</feature>
<feature type="modified residue" description="Phosphotyrosine; by autocatalysis" evidence="1">
    <location>
        <position position="731"/>
    </location>
</feature>
<feature type="modified residue" description="Phosphotyrosine; by autocatalysis" evidence="1">
    <location>
        <position position="742"/>
    </location>
</feature>
<feature type="modified residue" description="Phosphotyrosine; by autocatalysis" evidence="1">
    <location>
        <position position="754"/>
    </location>
</feature>
<feature type="modified residue" description="Phosphotyrosine; by autocatalysis" evidence="1">
    <location>
        <position position="762"/>
    </location>
</feature>
<feature type="modified residue" description="Phosphotyrosine; by autocatalysis" evidence="1">
    <location>
        <position position="768"/>
    </location>
</feature>
<feature type="modified residue" description="Phosphotyrosine; by autocatalysis" evidence="1">
    <location>
        <position position="849"/>
    </location>
</feature>
<feature type="modified residue" description="Phosphotyrosine; by autocatalysis" evidence="1">
    <location>
        <position position="988"/>
    </location>
</feature>
<feature type="modified residue" description="Phosphotyrosine; by autocatalysis" evidence="1">
    <location>
        <position position="1017"/>
    </location>
</feature>
<feature type="glycosylation site" description="N-linked (GlcNAc...) asparagine" evidence="4">
    <location>
        <position position="44"/>
    </location>
</feature>
<feature type="glycosylation site" description="N-linked (GlcNAc...) asparagine" evidence="4">
    <location>
        <position position="75"/>
    </location>
</feature>
<feature type="glycosylation site" description="N-linked (GlcNAc...) asparagine" evidence="4">
    <location>
        <position position="88"/>
    </location>
</feature>
<feature type="glycosylation site" description="N-linked (GlcNAc...) asparagine" evidence="4">
    <location>
        <position position="102"/>
    </location>
</feature>
<feature type="glycosylation site" description="N-linked (GlcNAc...) asparagine" evidence="4">
    <location>
        <position position="353"/>
    </location>
</feature>
<feature type="glycosylation site" description="N-linked (GlcNAc...) asparagine" evidence="4">
    <location>
        <position position="359"/>
    </location>
</feature>
<feature type="glycosylation site" description="N-linked (GlcNAc...) asparagine" evidence="4">
    <location>
        <position position="458"/>
    </location>
</feature>
<feature type="glycosylation site" description="N-linked (GlcNAc...) asparagine" evidence="4">
    <location>
        <position position="468"/>
    </location>
</feature>
<feature type="disulfide bond" evidence="5">
    <location>
        <begin position="49"/>
        <end position="99"/>
    </location>
</feature>
<feature type="disulfide bond" evidence="5">
    <location>
        <begin position="149"/>
        <end position="189"/>
    </location>
</feature>
<feature type="disulfide bond" evidence="5">
    <location>
        <begin position="235"/>
        <end position="290"/>
    </location>
</feature>
<feature type="disulfide bond" evidence="5">
    <location>
        <begin position="435"/>
        <end position="501"/>
    </location>
</feature>